<accession>P59502</accession>
<keyword id="KW-1185">Reference proteome</keyword>
<keyword id="KW-0687">Ribonucleoprotein</keyword>
<keyword id="KW-0689">Ribosomal protein</keyword>
<keyword id="KW-0694">RNA-binding</keyword>
<keyword id="KW-0699">rRNA-binding</keyword>
<reference key="1">
    <citation type="journal article" date="2003" name="Proc. Natl. Acad. Sci. U.S.A.">
        <title>Reductive genome evolution in Buchnera aphidicola.</title>
        <authorList>
            <person name="van Ham R.C.H.J."/>
            <person name="Kamerbeek J."/>
            <person name="Palacios C."/>
            <person name="Rausell C."/>
            <person name="Abascal F."/>
            <person name="Bastolla U."/>
            <person name="Fernandez J.M."/>
            <person name="Jimenez L."/>
            <person name="Postigo M."/>
            <person name="Silva F.J."/>
            <person name="Tamames J."/>
            <person name="Viguera E."/>
            <person name="Latorre A."/>
            <person name="Valencia A."/>
            <person name="Moran F."/>
            <person name="Moya A."/>
        </authorList>
    </citation>
    <scope>NUCLEOTIDE SEQUENCE [LARGE SCALE GENOMIC DNA]</scope>
    <source>
        <strain>Bp</strain>
    </source>
</reference>
<organism>
    <name type="scientific">Buchnera aphidicola subsp. Baizongia pistaciae (strain Bp)</name>
    <dbReference type="NCBI Taxonomy" id="224915"/>
    <lineage>
        <taxon>Bacteria</taxon>
        <taxon>Pseudomonadati</taxon>
        <taxon>Pseudomonadota</taxon>
        <taxon>Gammaproteobacteria</taxon>
        <taxon>Enterobacterales</taxon>
        <taxon>Erwiniaceae</taxon>
        <taxon>Buchnera</taxon>
    </lineage>
</organism>
<sequence>MVRYFRRRKFCRFTVEKIKEIDYKDLSMLKNYITESGKIVPSRITGTSARYQRQLARAIKRARYLSLLPYTDQHQ</sequence>
<gene>
    <name evidence="1" type="primary">rpsR</name>
    <name type="ordered locus">bbp_509</name>
</gene>
<evidence type="ECO:0000255" key="1">
    <source>
        <dbReference type="HAMAP-Rule" id="MF_00270"/>
    </source>
</evidence>
<evidence type="ECO:0000305" key="2"/>
<proteinExistence type="inferred from homology"/>
<feature type="chain" id="PRO_0000111132" description="Small ribosomal subunit protein bS18">
    <location>
        <begin position="1"/>
        <end position="75"/>
    </location>
</feature>
<dbReference type="EMBL" id="AE016826">
    <property type="protein sequence ID" value="AAO27212.1"/>
    <property type="molecule type" value="Genomic_DNA"/>
</dbReference>
<dbReference type="RefSeq" id="WP_011091613.1">
    <property type="nucleotide sequence ID" value="NC_004545.1"/>
</dbReference>
<dbReference type="SMR" id="P59502"/>
<dbReference type="STRING" id="224915.bbp_509"/>
<dbReference type="KEGG" id="bab:bbp_509"/>
<dbReference type="eggNOG" id="COG0238">
    <property type="taxonomic scope" value="Bacteria"/>
</dbReference>
<dbReference type="HOGENOM" id="CLU_148710_2_3_6"/>
<dbReference type="OrthoDB" id="9812008at2"/>
<dbReference type="Proteomes" id="UP000000601">
    <property type="component" value="Chromosome"/>
</dbReference>
<dbReference type="GO" id="GO:0022627">
    <property type="term" value="C:cytosolic small ribosomal subunit"/>
    <property type="evidence" value="ECO:0007669"/>
    <property type="project" value="TreeGrafter"/>
</dbReference>
<dbReference type="GO" id="GO:0070181">
    <property type="term" value="F:small ribosomal subunit rRNA binding"/>
    <property type="evidence" value="ECO:0007669"/>
    <property type="project" value="TreeGrafter"/>
</dbReference>
<dbReference type="GO" id="GO:0003735">
    <property type="term" value="F:structural constituent of ribosome"/>
    <property type="evidence" value="ECO:0007669"/>
    <property type="project" value="InterPro"/>
</dbReference>
<dbReference type="GO" id="GO:0006412">
    <property type="term" value="P:translation"/>
    <property type="evidence" value="ECO:0007669"/>
    <property type="project" value="UniProtKB-UniRule"/>
</dbReference>
<dbReference type="FunFam" id="4.10.640.10:FF:000001">
    <property type="entry name" value="30S ribosomal protein S18"/>
    <property type="match status" value="1"/>
</dbReference>
<dbReference type="Gene3D" id="4.10.640.10">
    <property type="entry name" value="Ribosomal protein S18"/>
    <property type="match status" value="1"/>
</dbReference>
<dbReference type="HAMAP" id="MF_00270">
    <property type="entry name" value="Ribosomal_bS18"/>
    <property type="match status" value="1"/>
</dbReference>
<dbReference type="InterPro" id="IPR001648">
    <property type="entry name" value="Ribosomal_bS18"/>
</dbReference>
<dbReference type="InterPro" id="IPR018275">
    <property type="entry name" value="Ribosomal_bS18_CS"/>
</dbReference>
<dbReference type="InterPro" id="IPR036870">
    <property type="entry name" value="Ribosomal_bS18_sf"/>
</dbReference>
<dbReference type="NCBIfam" id="TIGR00165">
    <property type="entry name" value="S18"/>
    <property type="match status" value="1"/>
</dbReference>
<dbReference type="PANTHER" id="PTHR13479">
    <property type="entry name" value="30S RIBOSOMAL PROTEIN S18"/>
    <property type="match status" value="1"/>
</dbReference>
<dbReference type="PANTHER" id="PTHR13479:SF40">
    <property type="entry name" value="SMALL RIBOSOMAL SUBUNIT PROTEIN BS18M"/>
    <property type="match status" value="1"/>
</dbReference>
<dbReference type="Pfam" id="PF01084">
    <property type="entry name" value="Ribosomal_S18"/>
    <property type="match status" value="1"/>
</dbReference>
<dbReference type="PRINTS" id="PR00974">
    <property type="entry name" value="RIBOSOMALS18"/>
</dbReference>
<dbReference type="SUPFAM" id="SSF46911">
    <property type="entry name" value="Ribosomal protein S18"/>
    <property type="match status" value="1"/>
</dbReference>
<dbReference type="PROSITE" id="PS00057">
    <property type="entry name" value="RIBOSOMAL_S18"/>
    <property type="match status" value="1"/>
</dbReference>
<comment type="function">
    <text evidence="1">Binds as a heterodimer with protein bS6 to the central domain of the 16S rRNA, where it helps stabilize the platform of the 30S subunit.</text>
</comment>
<comment type="subunit">
    <text evidence="1">Part of the 30S ribosomal subunit. Forms a tight heterodimer with protein bS6.</text>
</comment>
<comment type="similarity">
    <text evidence="1">Belongs to the bacterial ribosomal protein bS18 family.</text>
</comment>
<protein>
    <recommendedName>
        <fullName evidence="1">Small ribosomal subunit protein bS18</fullName>
    </recommendedName>
    <alternativeName>
        <fullName evidence="2">30S ribosomal protein S18</fullName>
    </alternativeName>
</protein>
<name>RS18_BUCBP</name>